<gene>
    <name type="primary">PLB2</name>
</gene>
<accession>O93795</accession>
<name>PLB2_CANAX</name>
<reference key="1">
    <citation type="journal article" date="1999" name="Med. Mycol.">
        <title>Molecular cloning of a second phospholipase B gene, caPLB2 from Candida albicans.</title>
        <authorList>
            <person name="Sugiyama Y."/>
            <person name="Nakashima S."/>
            <person name="Mirbod F."/>
            <person name="Kanoh H."/>
            <person name="Kitajima Y."/>
            <person name="Ghannoum M.A."/>
            <person name="Nozawa Y."/>
        </authorList>
    </citation>
    <scope>NUCLEOTIDE SEQUENCE [GENOMIC DNA]</scope>
</reference>
<protein>
    <recommendedName>
        <fullName>Lysophospholipase 2</fullName>
        <ecNumber>3.1.1.5</ecNumber>
    </recommendedName>
    <alternativeName>
        <fullName>CaPLB2</fullName>
    </alternativeName>
    <alternativeName>
        <fullName>Phospholipase B 2</fullName>
    </alternativeName>
</protein>
<keyword id="KW-0325">Glycoprotein</keyword>
<keyword id="KW-0378">Hydrolase</keyword>
<keyword id="KW-0442">Lipid degradation</keyword>
<keyword id="KW-0443">Lipid metabolism</keyword>
<keyword id="KW-0964">Secreted</keyword>
<keyword id="KW-0732">Signal</keyword>
<comment type="function">
    <text>Catalyzes the release of fatty acids from lysophospholipids. Phospholipase B may well contribute to pathogenicity by abetting the fungus in damaging and traversing host cell membranes, processes which likely increase the rapidity of disseminated infection.</text>
</comment>
<comment type="catalytic activity">
    <reaction>
        <text>a 1-acyl-sn-glycero-3-phosphocholine + H2O = sn-glycerol 3-phosphocholine + a fatty acid + H(+)</text>
        <dbReference type="Rhea" id="RHEA:15177"/>
        <dbReference type="ChEBI" id="CHEBI:15377"/>
        <dbReference type="ChEBI" id="CHEBI:15378"/>
        <dbReference type="ChEBI" id="CHEBI:16870"/>
        <dbReference type="ChEBI" id="CHEBI:28868"/>
        <dbReference type="ChEBI" id="CHEBI:58168"/>
        <dbReference type="EC" id="3.1.1.5"/>
    </reaction>
</comment>
<comment type="subcellular location">
    <subcellularLocation>
        <location evidence="3">Secreted</location>
    </subcellularLocation>
</comment>
<comment type="similarity">
    <text evidence="3">Belongs to the lysophospholipase family.</text>
</comment>
<sequence>MLVWQSILLFLVGCVLSKSPTNLYTPGYVQCPEGKLTRSSLDGINSNEKAYIDRRYANAKSELSRFLHNAKMVDFDVDGFLNSNPTIGLAFSGGGYRAMLAGAGELLALDSRATNPSVLSGILQSSSYIVGLSGGSWLVGSLASNDLIPVDQLLREDKLWDIQNSLVAYYGVNIVRNTAMWGNINLQVQTKQLAGFTVSITDVYGRALSHQLLTNFDNQGASFLWSDVTETTSFQNNEMPYPILAALGREPNTVLMNFNSTVFELTPYEVGSWDPSLRSFVDTKYIGTRLDDGAPVSKRCVNGFDNAGFFMGTSSSLFNIVLQQLNNMPIPPFLKELISKFTLDPVEKLNIDIAQYNPNPFHKSNNSDTKIAQSRTLYLADGGEDGQNVPLLPLIHRKVSAIFAFDQSADKNNWPDGSALIKTFERQFSSQGDGIAFPYVPDQNTFRNTNLTSKPTFFGCDAQNLTSLTENIYDVPVVIYLANRPFTYFSNISTFKLKYSDTERQGMISNGYDVASRLNGKLDNEWAACVGCAIIRREQERLGIEQTEQCKKCFENYCWDGTIYKGEPLGDNFSDEGLTTSAAYYNSNNVAGINDGGIALVKRDDLSN</sequence>
<evidence type="ECO:0000255" key="1"/>
<evidence type="ECO:0000255" key="2">
    <source>
        <dbReference type="PROSITE-ProRule" id="PRU00555"/>
    </source>
</evidence>
<evidence type="ECO:0000305" key="3"/>
<dbReference type="EC" id="3.1.1.5"/>
<dbReference type="EMBL" id="AB010809">
    <property type="protein sequence ID" value="BAA36162.1"/>
    <property type="molecule type" value="Genomic_DNA"/>
</dbReference>
<dbReference type="SMR" id="O93795"/>
<dbReference type="GlyCosmos" id="O93795">
    <property type="glycosylation" value="6 sites, No reported glycans"/>
</dbReference>
<dbReference type="VEuPathDB" id="FungiDB:C6_02000W_A"/>
<dbReference type="VEuPathDB" id="FungiDB:CAWG_05167"/>
<dbReference type="GO" id="GO:0005829">
    <property type="term" value="C:cytosol"/>
    <property type="evidence" value="ECO:0007669"/>
    <property type="project" value="TreeGrafter"/>
</dbReference>
<dbReference type="GO" id="GO:0005783">
    <property type="term" value="C:endoplasmic reticulum"/>
    <property type="evidence" value="ECO:0007669"/>
    <property type="project" value="TreeGrafter"/>
</dbReference>
<dbReference type="GO" id="GO:0005576">
    <property type="term" value="C:extracellular region"/>
    <property type="evidence" value="ECO:0007669"/>
    <property type="project" value="UniProtKB-SubCell"/>
</dbReference>
<dbReference type="GO" id="GO:0005886">
    <property type="term" value="C:plasma membrane"/>
    <property type="evidence" value="ECO:0007669"/>
    <property type="project" value="TreeGrafter"/>
</dbReference>
<dbReference type="GO" id="GO:0004622">
    <property type="term" value="F:lysophospholipase activity"/>
    <property type="evidence" value="ECO:0007669"/>
    <property type="project" value="UniProtKB-EC"/>
</dbReference>
<dbReference type="GO" id="GO:0004623">
    <property type="term" value="F:phospholipase A2 activity"/>
    <property type="evidence" value="ECO:0007669"/>
    <property type="project" value="TreeGrafter"/>
</dbReference>
<dbReference type="GO" id="GO:0046475">
    <property type="term" value="P:glycerophospholipid catabolic process"/>
    <property type="evidence" value="ECO:0007669"/>
    <property type="project" value="TreeGrafter"/>
</dbReference>
<dbReference type="FunFam" id="3.40.1090.10:FF:000010">
    <property type="entry name" value="Lysophospholipase"/>
    <property type="match status" value="1"/>
</dbReference>
<dbReference type="Gene3D" id="3.40.1090.10">
    <property type="entry name" value="Cytosolic phospholipase A2 catalytic domain"/>
    <property type="match status" value="1"/>
</dbReference>
<dbReference type="InterPro" id="IPR016035">
    <property type="entry name" value="Acyl_Trfase/lysoPLipase"/>
</dbReference>
<dbReference type="InterPro" id="IPR002642">
    <property type="entry name" value="LysoPLipase_cat_dom"/>
</dbReference>
<dbReference type="PANTHER" id="PTHR10728">
    <property type="entry name" value="CYTOSOLIC PHOSPHOLIPASE A2"/>
    <property type="match status" value="1"/>
</dbReference>
<dbReference type="PANTHER" id="PTHR10728:SF33">
    <property type="entry name" value="LYSOPHOSPHOLIPASE 1-RELATED"/>
    <property type="match status" value="1"/>
</dbReference>
<dbReference type="Pfam" id="PF01735">
    <property type="entry name" value="PLA2_B"/>
    <property type="match status" value="1"/>
</dbReference>
<dbReference type="SMART" id="SM00022">
    <property type="entry name" value="PLAc"/>
    <property type="match status" value="1"/>
</dbReference>
<dbReference type="SUPFAM" id="SSF52151">
    <property type="entry name" value="FabD/lysophospholipase-like"/>
    <property type="match status" value="1"/>
</dbReference>
<dbReference type="PROSITE" id="PS51210">
    <property type="entry name" value="PLA2C"/>
    <property type="match status" value="1"/>
</dbReference>
<feature type="signal peptide" evidence="1">
    <location>
        <begin position="1"/>
        <end position="17"/>
    </location>
</feature>
<feature type="chain" id="PRO_0000024631" description="Lysophospholipase 2">
    <location>
        <begin position="18"/>
        <end position="608"/>
    </location>
</feature>
<feature type="domain" description="PLA2c" evidence="2">
    <location>
        <begin position="30"/>
        <end position="564"/>
    </location>
</feature>
<feature type="glycosylation site" description="N-linked (GlcNAc...) asparagine" evidence="1">
    <location>
        <position position="259"/>
    </location>
</feature>
<feature type="glycosylation site" description="N-linked (GlcNAc...) asparagine" evidence="1">
    <location>
        <position position="365"/>
    </location>
</feature>
<feature type="glycosylation site" description="N-linked (GlcNAc...) asparagine" evidence="1">
    <location>
        <position position="450"/>
    </location>
</feature>
<feature type="glycosylation site" description="N-linked (GlcNAc...) asparagine" evidence="1">
    <location>
        <position position="464"/>
    </location>
</feature>
<feature type="glycosylation site" description="N-linked (GlcNAc...) asparagine" evidence="1">
    <location>
        <position position="491"/>
    </location>
</feature>
<feature type="glycosylation site" description="N-linked (GlcNAc...) asparagine" evidence="1">
    <location>
        <position position="572"/>
    </location>
</feature>
<organism>
    <name type="scientific">Candida albicans</name>
    <name type="common">Yeast</name>
    <dbReference type="NCBI Taxonomy" id="5476"/>
    <lineage>
        <taxon>Eukaryota</taxon>
        <taxon>Fungi</taxon>
        <taxon>Dikarya</taxon>
        <taxon>Ascomycota</taxon>
        <taxon>Saccharomycotina</taxon>
        <taxon>Pichiomycetes</taxon>
        <taxon>Debaryomycetaceae</taxon>
        <taxon>Candida/Lodderomyces clade</taxon>
        <taxon>Candida</taxon>
    </lineage>
</organism>
<proteinExistence type="inferred from homology"/>